<name>KATG_KLEP7</name>
<evidence type="ECO:0000255" key="1">
    <source>
        <dbReference type="HAMAP-Rule" id="MF_01961"/>
    </source>
</evidence>
<evidence type="ECO:0000256" key="2">
    <source>
        <dbReference type="SAM" id="MobiDB-lite"/>
    </source>
</evidence>
<accession>A6T9H9</accession>
<organism>
    <name type="scientific">Klebsiella pneumoniae subsp. pneumoniae (strain ATCC 700721 / MGH 78578)</name>
    <dbReference type="NCBI Taxonomy" id="272620"/>
    <lineage>
        <taxon>Bacteria</taxon>
        <taxon>Pseudomonadati</taxon>
        <taxon>Pseudomonadota</taxon>
        <taxon>Gammaproteobacteria</taxon>
        <taxon>Enterobacterales</taxon>
        <taxon>Enterobacteriaceae</taxon>
        <taxon>Klebsiella/Raoultella group</taxon>
        <taxon>Klebsiella</taxon>
        <taxon>Klebsiella pneumoniae complex</taxon>
    </lineage>
</organism>
<feature type="signal peptide" evidence="1">
    <location>
        <begin position="1"/>
        <end position="20"/>
    </location>
</feature>
<feature type="chain" id="PRO_0000354814" description="Catalase-peroxidase">
    <location>
        <begin position="21"/>
        <end position="725"/>
    </location>
</feature>
<feature type="region of interest" description="Disordered" evidence="2">
    <location>
        <begin position="1"/>
        <end position="35"/>
    </location>
</feature>
<feature type="compositionally biased region" description="Polar residues" evidence="2">
    <location>
        <begin position="1"/>
        <end position="12"/>
    </location>
</feature>
<feature type="compositionally biased region" description="Polar residues" evidence="2">
    <location>
        <begin position="23"/>
        <end position="32"/>
    </location>
</feature>
<feature type="active site" description="Proton acceptor" evidence="1">
    <location>
        <position position="106"/>
    </location>
</feature>
<feature type="binding site" description="axial binding residue" evidence="1">
    <location>
        <position position="267"/>
    </location>
    <ligand>
        <name>heme b</name>
        <dbReference type="ChEBI" id="CHEBI:60344"/>
    </ligand>
    <ligandPart>
        <name>Fe</name>
        <dbReference type="ChEBI" id="CHEBI:18248"/>
    </ligandPart>
</feature>
<feature type="site" description="Transition state stabilizer" evidence="1">
    <location>
        <position position="102"/>
    </location>
</feature>
<feature type="cross-link" description="Tryptophyl-tyrosyl-methioninium (Trp-Tyr) (with M-252)" evidence="1">
    <location>
        <begin position="105"/>
        <end position="226"/>
    </location>
</feature>
<feature type="cross-link" description="Tryptophyl-tyrosyl-methioninium (Tyr-Met) (with W-105)" evidence="1">
    <location>
        <begin position="226"/>
        <end position="252"/>
    </location>
</feature>
<comment type="function">
    <text evidence="1">Bifunctional enzyme with both catalase and broad-spectrum peroxidase activity.</text>
</comment>
<comment type="catalytic activity">
    <reaction evidence="1">
        <text>H2O2 + AH2 = A + 2 H2O</text>
        <dbReference type="Rhea" id="RHEA:30275"/>
        <dbReference type="ChEBI" id="CHEBI:13193"/>
        <dbReference type="ChEBI" id="CHEBI:15377"/>
        <dbReference type="ChEBI" id="CHEBI:16240"/>
        <dbReference type="ChEBI" id="CHEBI:17499"/>
        <dbReference type="EC" id="1.11.1.21"/>
    </reaction>
</comment>
<comment type="catalytic activity">
    <reaction evidence="1">
        <text>2 H2O2 = O2 + 2 H2O</text>
        <dbReference type="Rhea" id="RHEA:20309"/>
        <dbReference type="ChEBI" id="CHEBI:15377"/>
        <dbReference type="ChEBI" id="CHEBI:15379"/>
        <dbReference type="ChEBI" id="CHEBI:16240"/>
        <dbReference type="EC" id="1.11.1.21"/>
    </reaction>
</comment>
<comment type="cofactor">
    <cofactor evidence="1">
        <name>heme b</name>
        <dbReference type="ChEBI" id="CHEBI:60344"/>
    </cofactor>
    <text evidence="1">Binds 1 heme b (iron(II)-protoporphyrin IX) group per dimer.</text>
</comment>
<comment type="subunit">
    <text evidence="1">Homodimer or homotetramer.</text>
</comment>
<comment type="PTM">
    <text evidence="1">Formation of the three residue Trp-Tyr-Met cross-link is important for the catalase, but not the peroxidase activity of the enzyme.</text>
</comment>
<comment type="similarity">
    <text evidence="1">Belongs to the peroxidase family. Peroxidase/catalase subfamily.</text>
</comment>
<proteinExistence type="inferred from homology"/>
<keyword id="KW-0349">Heme</keyword>
<keyword id="KW-0376">Hydrogen peroxide</keyword>
<keyword id="KW-0408">Iron</keyword>
<keyword id="KW-0479">Metal-binding</keyword>
<keyword id="KW-0560">Oxidoreductase</keyword>
<keyword id="KW-0575">Peroxidase</keyword>
<keyword id="KW-0732">Signal</keyword>
<dbReference type="EC" id="1.11.1.21" evidence="1"/>
<dbReference type="EMBL" id="CP000647">
    <property type="protein sequence ID" value="ABR77250.1"/>
    <property type="molecule type" value="Genomic_DNA"/>
</dbReference>
<dbReference type="RefSeq" id="WP_004176050.1">
    <property type="nucleotide sequence ID" value="NC_009648.1"/>
</dbReference>
<dbReference type="SMR" id="A6T9H9"/>
<dbReference type="STRING" id="272620.KPN_01819"/>
<dbReference type="jPOST" id="A6T9H9"/>
<dbReference type="PaxDb" id="272620-KPN_01819"/>
<dbReference type="EnsemblBacteria" id="ABR77250">
    <property type="protein sequence ID" value="ABR77250"/>
    <property type="gene ID" value="KPN_01819"/>
</dbReference>
<dbReference type="KEGG" id="kpn:KPN_01819"/>
<dbReference type="HOGENOM" id="CLU_025424_2_0_6"/>
<dbReference type="Proteomes" id="UP000000265">
    <property type="component" value="Chromosome"/>
</dbReference>
<dbReference type="GO" id="GO:0005829">
    <property type="term" value="C:cytosol"/>
    <property type="evidence" value="ECO:0007669"/>
    <property type="project" value="TreeGrafter"/>
</dbReference>
<dbReference type="GO" id="GO:0004096">
    <property type="term" value="F:catalase activity"/>
    <property type="evidence" value="ECO:0007669"/>
    <property type="project" value="UniProtKB-UniRule"/>
</dbReference>
<dbReference type="GO" id="GO:0020037">
    <property type="term" value="F:heme binding"/>
    <property type="evidence" value="ECO:0007669"/>
    <property type="project" value="InterPro"/>
</dbReference>
<dbReference type="GO" id="GO:0046872">
    <property type="term" value="F:metal ion binding"/>
    <property type="evidence" value="ECO:0007669"/>
    <property type="project" value="UniProtKB-KW"/>
</dbReference>
<dbReference type="GO" id="GO:0070301">
    <property type="term" value="P:cellular response to hydrogen peroxide"/>
    <property type="evidence" value="ECO:0007669"/>
    <property type="project" value="TreeGrafter"/>
</dbReference>
<dbReference type="GO" id="GO:0042744">
    <property type="term" value="P:hydrogen peroxide catabolic process"/>
    <property type="evidence" value="ECO:0007669"/>
    <property type="project" value="UniProtKB-KW"/>
</dbReference>
<dbReference type="CDD" id="cd08200">
    <property type="entry name" value="catalase_peroxidase_2"/>
    <property type="match status" value="1"/>
</dbReference>
<dbReference type="FunFam" id="1.10.420.10:FF:000002">
    <property type="entry name" value="Catalase-peroxidase"/>
    <property type="match status" value="1"/>
</dbReference>
<dbReference type="FunFam" id="1.10.420.10:FF:000004">
    <property type="entry name" value="Catalase-peroxidase"/>
    <property type="match status" value="1"/>
</dbReference>
<dbReference type="FunFam" id="1.10.520.10:FF:000002">
    <property type="entry name" value="Catalase-peroxidase"/>
    <property type="match status" value="1"/>
</dbReference>
<dbReference type="Gene3D" id="1.10.520.10">
    <property type="match status" value="2"/>
</dbReference>
<dbReference type="Gene3D" id="1.10.420.10">
    <property type="entry name" value="Peroxidase, domain 2"/>
    <property type="match status" value="2"/>
</dbReference>
<dbReference type="HAMAP" id="MF_01961">
    <property type="entry name" value="Catal_peroxid"/>
    <property type="match status" value="1"/>
</dbReference>
<dbReference type="InterPro" id="IPR000763">
    <property type="entry name" value="Catalase_peroxidase"/>
</dbReference>
<dbReference type="InterPro" id="IPR002016">
    <property type="entry name" value="Haem_peroxidase"/>
</dbReference>
<dbReference type="InterPro" id="IPR010255">
    <property type="entry name" value="Haem_peroxidase_sf"/>
</dbReference>
<dbReference type="NCBIfam" id="TIGR00198">
    <property type="entry name" value="cat_per_HPI"/>
    <property type="match status" value="1"/>
</dbReference>
<dbReference type="NCBIfam" id="NF011635">
    <property type="entry name" value="PRK15061.1"/>
    <property type="match status" value="1"/>
</dbReference>
<dbReference type="PANTHER" id="PTHR30555:SF0">
    <property type="entry name" value="CATALASE-PEROXIDASE"/>
    <property type="match status" value="1"/>
</dbReference>
<dbReference type="PANTHER" id="PTHR30555">
    <property type="entry name" value="HYDROPEROXIDASE I, BIFUNCTIONAL CATALASE-PEROXIDASE"/>
    <property type="match status" value="1"/>
</dbReference>
<dbReference type="Pfam" id="PF00141">
    <property type="entry name" value="peroxidase"/>
    <property type="match status" value="2"/>
</dbReference>
<dbReference type="PRINTS" id="PR00460">
    <property type="entry name" value="BPEROXIDASE"/>
</dbReference>
<dbReference type="PRINTS" id="PR00458">
    <property type="entry name" value="PEROXIDASE"/>
</dbReference>
<dbReference type="SUPFAM" id="SSF48113">
    <property type="entry name" value="Heme-dependent peroxidases"/>
    <property type="match status" value="2"/>
</dbReference>
<dbReference type="PROSITE" id="PS50873">
    <property type="entry name" value="PEROXIDASE_4"/>
    <property type="match status" value="1"/>
</dbReference>
<gene>
    <name evidence="1" type="primary">katG</name>
    <name type="ordered locus">KPN78578_17890</name>
    <name type="ORF">KPN_01819</name>
</gene>
<reference key="1">
    <citation type="submission" date="2006-09" db="EMBL/GenBank/DDBJ databases">
        <authorList>
            <consortium name="The Klebsiella pneumonia Genome Sequencing Project"/>
            <person name="McClelland M."/>
            <person name="Sanderson E.K."/>
            <person name="Spieth J."/>
            <person name="Clifton W.S."/>
            <person name="Latreille P."/>
            <person name="Sabo A."/>
            <person name="Pepin K."/>
            <person name="Bhonagiri V."/>
            <person name="Porwollik S."/>
            <person name="Ali J."/>
            <person name="Wilson R.K."/>
        </authorList>
    </citation>
    <scope>NUCLEOTIDE SEQUENCE [LARGE SCALE GENOMIC DNA]</scope>
    <source>
        <strain>ATCC 700721 / MGH 78578</strain>
    </source>
</reference>
<protein>
    <recommendedName>
        <fullName evidence="1">Catalase-peroxidase</fullName>
        <shortName evidence="1">CP</shortName>
        <ecNumber evidence="1">1.11.1.21</ecNumber>
    </recommendedName>
    <alternativeName>
        <fullName evidence="1">Peroxidase/catalase</fullName>
    </alternativeName>
</protein>
<sequence>MSTSNDPSNNASAGKCPFHAETPKQSAGSGTANRDWWPNQLRVDLLNQHSNRSNPLGENFNYREEFKKLDYSALKADLRALLTDSQEWWPADWGSYIGLFIRMAWHGAGTYRTVDGRGGAGRGQQRFAPLNSWPDNVSLDKARRLLWPVKQKYGQKISWADLYMLAGNVALENAGFRTFGFGAGREDVWEPDLDVDWGDEKEWLAHRHPESLAKQAIGATEMGLIYVNPEGPNASGEPLSAAAAIRATFGNMAMDDEEIVALIAGGHTLGKTHGAAETSHVGAEPEAAPLEAQGLGWHSSYGSGAGADAITSGLEVVWTQTPTQWSNYFFENLFKYEWVQTRSPAGAIQFEAKDAPEIIPDPFNPEKKRKPTMLVTDLTLRFDPEFEKISRRFLNDPQAFNEAFARAWFKLTHRDMGPKSRYLGPEVPKEDLIWQDPLPAATHQPSAEDIASLKTAIAGAGLSVSELVSVAWASASTFRGGDKRGGANGARLALAPQKDWPVNAIASRVLPTLQAIQRASGKASLADIIVLAGVVGVEQAAAAAGVSVNVPFTPGRVDALPEQTDVESFDLLQPLADGFRNYRRIEGGVSTETLLIDKAQQLTLTAPEMTVLVGGLRVLGANYDGSKHGVFTDRVGVLSNDFFVNLLDMATVWKAADDNAELFTGSDRKTGEAKYSATRVDLVFGSNSVLRALAEVYACADGQQKLVHDFVAAWTKVMNLDRFDL</sequence>